<organism>
    <name type="scientific">Schizosaccharomyces pombe (strain 972 / ATCC 24843)</name>
    <name type="common">Fission yeast</name>
    <dbReference type="NCBI Taxonomy" id="284812"/>
    <lineage>
        <taxon>Eukaryota</taxon>
        <taxon>Fungi</taxon>
        <taxon>Dikarya</taxon>
        <taxon>Ascomycota</taxon>
        <taxon>Taphrinomycotina</taxon>
        <taxon>Schizosaccharomycetes</taxon>
        <taxon>Schizosaccharomycetales</taxon>
        <taxon>Schizosaccharomycetaceae</taxon>
        <taxon>Schizosaccharomyces</taxon>
    </lineage>
</organism>
<name>HIS8_SCHPO</name>
<protein>
    <recommendedName>
        <fullName>Histidinol-phosphate aminotransferase</fullName>
        <ecNumber>2.6.1.9</ecNumber>
    </recommendedName>
    <alternativeName>
        <fullName>Imidazole acetol-phosphate transaminase</fullName>
    </alternativeName>
</protein>
<keyword id="KW-0028">Amino-acid biosynthesis</keyword>
<keyword id="KW-0032">Aminotransferase</keyword>
<keyword id="KW-0368">Histidine biosynthesis</keyword>
<keyword id="KW-0663">Pyridoxal phosphate</keyword>
<keyword id="KW-1185">Reference proteome</keyword>
<keyword id="KW-0808">Transferase</keyword>
<sequence length="384" mass="42734">MFDLNTCLRKNILELQPYRCARDDFSEGVLLDANECAYGSVISVDGVEFNRYPDPRQIEVKQRLCDLRNKELSITKPLTPDNICMGVGSDEIIDSLIRISCIPGKDKILMCPPSYGMYTVSAKINDVEVVKVLLEPDFNLNVDAICETLSKDSAIKVFFACSPGNPTAKALKLEDIKKILEHPTWNGIVVVDEAYIDFSAPDMSALTLVNEYPNLAVCQTLSKSFGLAGIRIGFCLTSKPIATIMNSLKAPYNISEPTSRLALDALSPQSIDKMHTYRDAIIQQRVRLCKELTTIKGMGKIIGGYDANFILIQVLDRPEGGKPSNDAAKYLYLQMATMHKVVVRFRGTEPLCEGALRITVGTEEENTILLKTIKLVLQEYYTKK</sequence>
<dbReference type="EC" id="2.6.1.9"/>
<dbReference type="EMBL" id="L19523">
    <property type="protein sequence ID" value="AAA67316.1"/>
    <property type="molecule type" value="Genomic_DNA"/>
</dbReference>
<dbReference type="EMBL" id="L19524">
    <property type="protein sequence ID" value="AAA86664.1"/>
    <property type="molecule type" value="Genomic_DNA"/>
</dbReference>
<dbReference type="EMBL" id="AB004534">
    <property type="protein sequence ID" value="BAA21386.1"/>
    <property type="molecule type" value="Genomic_DNA"/>
</dbReference>
<dbReference type="EMBL" id="CU329671">
    <property type="protein sequence ID" value="CAC37506.1"/>
    <property type="molecule type" value="Genomic_DNA"/>
</dbReference>
<dbReference type="PIR" id="S41584">
    <property type="entry name" value="S41584"/>
</dbReference>
<dbReference type="RefSeq" id="NP_595622.1">
    <property type="nucleotide sequence ID" value="NM_001021516.2"/>
</dbReference>
<dbReference type="SMR" id="P36605"/>
<dbReference type="BioGRID" id="276251">
    <property type="interactions" value="4"/>
</dbReference>
<dbReference type="FunCoup" id="P36605">
    <property type="interactions" value="131"/>
</dbReference>
<dbReference type="STRING" id="284812.P36605"/>
<dbReference type="iPTMnet" id="P36605"/>
<dbReference type="PaxDb" id="4896-SPBC11B10.02c.1"/>
<dbReference type="EnsemblFungi" id="SPBC11B10.02c.1">
    <property type="protein sequence ID" value="SPBC11B10.02c.1:pep"/>
    <property type="gene ID" value="SPBC11B10.02c"/>
</dbReference>
<dbReference type="GeneID" id="2539698"/>
<dbReference type="KEGG" id="spo:2539698"/>
<dbReference type="PomBase" id="SPBC11B10.02c">
    <property type="gene designation" value="his3"/>
</dbReference>
<dbReference type="VEuPathDB" id="FungiDB:SPBC11B10.02c"/>
<dbReference type="eggNOG" id="KOG0633">
    <property type="taxonomic scope" value="Eukaryota"/>
</dbReference>
<dbReference type="HOGENOM" id="CLU_017584_3_1_1"/>
<dbReference type="InParanoid" id="P36605"/>
<dbReference type="OMA" id="NFVQFGR"/>
<dbReference type="PhylomeDB" id="P36605"/>
<dbReference type="UniPathway" id="UPA00031">
    <property type="reaction ID" value="UER00012"/>
</dbReference>
<dbReference type="PRO" id="PR:P36605"/>
<dbReference type="Proteomes" id="UP000002485">
    <property type="component" value="Chromosome II"/>
</dbReference>
<dbReference type="GO" id="GO:0005829">
    <property type="term" value="C:cytosol"/>
    <property type="evidence" value="ECO:0007005"/>
    <property type="project" value="PomBase"/>
</dbReference>
<dbReference type="GO" id="GO:0005634">
    <property type="term" value="C:nucleus"/>
    <property type="evidence" value="ECO:0007005"/>
    <property type="project" value="PomBase"/>
</dbReference>
<dbReference type="GO" id="GO:0004400">
    <property type="term" value="F:histidinol-phosphate transaminase activity"/>
    <property type="evidence" value="ECO:0000304"/>
    <property type="project" value="PomBase"/>
</dbReference>
<dbReference type="GO" id="GO:0030170">
    <property type="term" value="F:pyridoxal phosphate binding"/>
    <property type="evidence" value="ECO:0007669"/>
    <property type="project" value="InterPro"/>
</dbReference>
<dbReference type="GO" id="GO:0000105">
    <property type="term" value="P:L-histidine biosynthetic process"/>
    <property type="evidence" value="ECO:0000315"/>
    <property type="project" value="PomBase"/>
</dbReference>
<dbReference type="CDD" id="cd00609">
    <property type="entry name" value="AAT_like"/>
    <property type="match status" value="1"/>
</dbReference>
<dbReference type="Gene3D" id="3.90.1150.10">
    <property type="entry name" value="Aspartate Aminotransferase, domain 1"/>
    <property type="match status" value="1"/>
</dbReference>
<dbReference type="Gene3D" id="3.40.640.10">
    <property type="entry name" value="Type I PLP-dependent aspartate aminotransferase-like (Major domain)"/>
    <property type="match status" value="1"/>
</dbReference>
<dbReference type="HAMAP" id="MF_01023">
    <property type="entry name" value="HisC_aminotrans_2"/>
    <property type="match status" value="1"/>
</dbReference>
<dbReference type="InterPro" id="IPR001917">
    <property type="entry name" value="Aminotrans_II_pyridoxalP_BS"/>
</dbReference>
<dbReference type="InterPro" id="IPR004839">
    <property type="entry name" value="Aminotransferase_I/II_large"/>
</dbReference>
<dbReference type="InterPro" id="IPR005861">
    <property type="entry name" value="HisP_aminotrans"/>
</dbReference>
<dbReference type="InterPro" id="IPR015424">
    <property type="entry name" value="PyrdxlP-dep_Trfase"/>
</dbReference>
<dbReference type="InterPro" id="IPR015421">
    <property type="entry name" value="PyrdxlP-dep_Trfase_major"/>
</dbReference>
<dbReference type="InterPro" id="IPR015422">
    <property type="entry name" value="PyrdxlP-dep_Trfase_small"/>
</dbReference>
<dbReference type="NCBIfam" id="TIGR01141">
    <property type="entry name" value="hisC"/>
    <property type="match status" value="1"/>
</dbReference>
<dbReference type="PANTHER" id="PTHR42885:SF2">
    <property type="entry name" value="HISTIDINOL-PHOSPHATE AMINOTRANSFERASE"/>
    <property type="match status" value="1"/>
</dbReference>
<dbReference type="PANTHER" id="PTHR42885">
    <property type="entry name" value="HISTIDINOL-PHOSPHATE AMINOTRANSFERASE-RELATED"/>
    <property type="match status" value="1"/>
</dbReference>
<dbReference type="Pfam" id="PF00155">
    <property type="entry name" value="Aminotran_1_2"/>
    <property type="match status" value="1"/>
</dbReference>
<dbReference type="SUPFAM" id="SSF53383">
    <property type="entry name" value="PLP-dependent transferases"/>
    <property type="match status" value="1"/>
</dbReference>
<dbReference type="PROSITE" id="PS00599">
    <property type="entry name" value="AA_TRANSFER_CLASS_2"/>
    <property type="match status" value="1"/>
</dbReference>
<accession>P36605</accession>
<feature type="chain" id="PRO_0000153508" description="Histidinol-phosphate aminotransferase">
    <location>
        <begin position="1"/>
        <end position="384"/>
    </location>
</feature>
<feature type="modified residue" description="N6-(pyridoxal phosphate)lysine" evidence="1">
    <location>
        <position position="223"/>
    </location>
</feature>
<evidence type="ECO:0000305" key="1"/>
<gene>
    <name type="primary">his3</name>
    <name type="ORF">pi009</name>
    <name type="ORF">SPBC11B10.02c</name>
</gene>
<comment type="catalytic activity">
    <reaction>
        <text>L-histidinol phosphate + 2-oxoglutarate = 3-(imidazol-4-yl)-2-oxopropyl phosphate + L-glutamate</text>
        <dbReference type="Rhea" id="RHEA:23744"/>
        <dbReference type="ChEBI" id="CHEBI:16810"/>
        <dbReference type="ChEBI" id="CHEBI:29985"/>
        <dbReference type="ChEBI" id="CHEBI:57766"/>
        <dbReference type="ChEBI" id="CHEBI:57980"/>
        <dbReference type="EC" id="2.6.1.9"/>
    </reaction>
</comment>
<comment type="cofactor">
    <cofactor>
        <name>pyridoxal 5'-phosphate</name>
        <dbReference type="ChEBI" id="CHEBI:597326"/>
    </cofactor>
</comment>
<comment type="pathway">
    <text>Amino-acid biosynthesis; L-histidine biosynthesis; L-histidine from 5-phospho-alpha-D-ribose 1-diphosphate: step 7/9.</text>
</comment>
<comment type="similarity">
    <text evidence="1">Belongs to the class-II pyridoxal-phosphate-dependent aminotransferase family.</text>
</comment>
<proteinExistence type="inferred from homology"/>
<reference key="1">
    <citation type="journal article" date="1994" name="Mol. Gen. Genet.">
        <title>Molecular cloning and characterization of the Schizosaccharomyces pombe his3 gene for use as a selectable marker.</title>
        <authorList>
            <person name="Burke J.D."/>
            <person name="Gould K.L."/>
        </authorList>
    </citation>
    <scope>NUCLEOTIDE SEQUENCE [GENOMIC DNA]</scope>
    <source>
        <strain>972 / ATCC 24843</strain>
    </source>
</reference>
<reference key="2">
    <citation type="journal article" date="2000" name="Yeast">
        <title>A 38 kb segment containing the cdc2 gene from the left arm of fission yeast chromosome II: sequence analysis and characterization of the genomic DNA and cDNAs encoded on the segment.</title>
        <authorList>
            <person name="Machida M."/>
            <person name="Yamazaki S."/>
            <person name="Kunihiro S."/>
            <person name="Tanaka T."/>
            <person name="Kushida N."/>
            <person name="Jinno K."/>
            <person name="Haikawa Y."/>
            <person name="Yamazaki J."/>
            <person name="Yamamoto S."/>
            <person name="Sekine M."/>
            <person name="Oguchi A."/>
            <person name="Nagai Y."/>
            <person name="Sakai M."/>
            <person name="Aoki K."/>
            <person name="Ogura K."/>
            <person name="Kudoh Y."/>
            <person name="Kikuchi H."/>
            <person name="Zhang M.Q."/>
            <person name="Yanagida M."/>
        </authorList>
    </citation>
    <scope>NUCLEOTIDE SEQUENCE [LARGE SCALE GENOMIC DNA]</scope>
    <source>
        <strain>972 / ATCC 24843</strain>
    </source>
</reference>
<reference key="3">
    <citation type="journal article" date="2002" name="Nature">
        <title>The genome sequence of Schizosaccharomyces pombe.</title>
        <authorList>
            <person name="Wood V."/>
            <person name="Gwilliam R."/>
            <person name="Rajandream M.A."/>
            <person name="Lyne M.H."/>
            <person name="Lyne R."/>
            <person name="Stewart A."/>
            <person name="Sgouros J.G."/>
            <person name="Peat N."/>
            <person name="Hayles J."/>
            <person name="Baker S.G."/>
            <person name="Basham D."/>
            <person name="Bowman S."/>
            <person name="Brooks K."/>
            <person name="Brown D."/>
            <person name="Brown S."/>
            <person name="Chillingworth T."/>
            <person name="Churcher C.M."/>
            <person name="Collins M."/>
            <person name="Connor R."/>
            <person name="Cronin A."/>
            <person name="Davis P."/>
            <person name="Feltwell T."/>
            <person name="Fraser A."/>
            <person name="Gentles S."/>
            <person name="Goble A."/>
            <person name="Hamlin N."/>
            <person name="Harris D.E."/>
            <person name="Hidalgo J."/>
            <person name="Hodgson G."/>
            <person name="Holroyd S."/>
            <person name="Hornsby T."/>
            <person name="Howarth S."/>
            <person name="Huckle E.J."/>
            <person name="Hunt S."/>
            <person name="Jagels K."/>
            <person name="James K.D."/>
            <person name="Jones L."/>
            <person name="Jones M."/>
            <person name="Leather S."/>
            <person name="McDonald S."/>
            <person name="McLean J."/>
            <person name="Mooney P."/>
            <person name="Moule S."/>
            <person name="Mungall K.L."/>
            <person name="Murphy L.D."/>
            <person name="Niblett D."/>
            <person name="Odell C."/>
            <person name="Oliver K."/>
            <person name="O'Neil S."/>
            <person name="Pearson D."/>
            <person name="Quail M.A."/>
            <person name="Rabbinowitsch E."/>
            <person name="Rutherford K.M."/>
            <person name="Rutter S."/>
            <person name="Saunders D."/>
            <person name="Seeger K."/>
            <person name="Sharp S."/>
            <person name="Skelton J."/>
            <person name="Simmonds M.N."/>
            <person name="Squares R."/>
            <person name="Squares S."/>
            <person name="Stevens K."/>
            <person name="Taylor K."/>
            <person name="Taylor R.G."/>
            <person name="Tivey A."/>
            <person name="Walsh S.V."/>
            <person name="Warren T."/>
            <person name="Whitehead S."/>
            <person name="Woodward J.R."/>
            <person name="Volckaert G."/>
            <person name="Aert R."/>
            <person name="Robben J."/>
            <person name="Grymonprez B."/>
            <person name="Weltjens I."/>
            <person name="Vanstreels E."/>
            <person name="Rieger M."/>
            <person name="Schaefer M."/>
            <person name="Mueller-Auer S."/>
            <person name="Gabel C."/>
            <person name="Fuchs M."/>
            <person name="Duesterhoeft A."/>
            <person name="Fritzc C."/>
            <person name="Holzer E."/>
            <person name="Moestl D."/>
            <person name="Hilbert H."/>
            <person name="Borzym K."/>
            <person name="Langer I."/>
            <person name="Beck A."/>
            <person name="Lehrach H."/>
            <person name="Reinhardt R."/>
            <person name="Pohl T.M."/>
            <person name="Eger P."/>
            <person name="Zimmermann W."/>
            <person name="Wedler H."/>
            <person name="Wambutt R."/>
            <person name="Purnelle B."/>
            <person name="Goffeau A."/>
            <person name="Cadieu E."/>
            <person name="Dreano S."/>
            <person name="Gloux S."/>
            <person name="Lelaure V."/>
            <person name="Mottier S."/>
            <person name="Galibert F."/>
            <person name="Aves S.J."/>
            <person name="Xiang Z."/>
            <person name="Hunt C."/>
            <person name="Moore K."/>
            <person name="Hurst S.M."/>
            <person name="Lucas M."/>
            <person name="Rochet M."/>
            <person name="Gaillardin C."/>
            <person name="Tallada V.A."/>
            <person name="Garzon A."/>
            <person name="Thode G."/>
            <person name="Daga R.R."/>
            <person name="Cruzado L."/>
            <person name="Jimenez J."/>
            <person name="Sanchez M."/>
            <person name="del Rey F."/>
            <person name="Benito J."/>
            <person name="Dominguez A."/>
            <person name="Revuelta J.L."/>
            <person name="Moreno S."/>
            <person name="Armstrong J."/>
            <person name="Forsburg S.L."/>
            <person name="Cerutti L."/>
            <person name="Lowe T."/>
            <person name="McCombie W.R."/>
            <person name="Paulsen I."/>
            <person name="Potashkin J."/>
            <person name="Shpakovski G.V."/>
            <person name="Ussery D."/>
            <person name="Barrell B.G."/>
            <person name="Nurse P."/>
        </authorList>
    </citation>
    <scope>NUCLEOTIDE SEQUENCE [LARGE SCALE GENOMIC DNA]</scope>
    <source>
        <strain>972 / ATCC 24843</strain>
    </source>
</reference>